<protein>
    <recommendedName>
        <fullName>Putative ATP-dependent RNA helicase T26G10.1</fullName>
        <ecNumber>3.6.4.13</ecNumber>
    </recommendedName>
</protein>
<keyword id="KW-0067">ATP-binding</keyword>
<keyword id="KW-0347">Helicase</keyword>
<keyword id="KW-0378">Hydrolase</keyword>
<keyword id="KW-0547">Nucleotide-binding</keyword>
<keyword id="KW-0539">Nucleus</keyword>
<keyword id="KW-1185">Reference proteome</keyword>
<keyword id="KW-0690">Ribosome biogenesis</keyword>
<keyword id="KW-0694">RNA-binding</keyword>
<keyword id="KW-0698">rRNA processing</keyword>
<proteinExistence type="inferred from homology"/>
<dbReference type="EC" id="3.6.4.13"/>
<dbReference type="EMBL" id="Z29115">
    <property type="protein sequence ID" value="CAA82362.1"/>
    <property type="molecule type" value="Genomic_DNA"/>
</dbReference>
<dbReference type="PIR" id="S40731">
    <property type="entry name" value="S40731"/>
</dbReference>
<dbReference type="RefSeq" id="NP_499069.1">
    <property type="nucleotide sequence ID" value="NM_066668.9"/>
</dbReference>
<dbReference type="SMR" id="P34580"/>
<dbReference type="BioGRID" id="41518">
    <property type="interactions" value="4"/>
</dbReference>
<dbReference type="FunCoup" id="P34580">
    <property type="interactions" value="3034"/>
</dbReference>
<dbReference type="STRING" id="6239.T26G10.1.1"/>
<dbReference type="PaxDb" id="6239-T26G10.1"/>
<dbReference type="PeptideAtlas" id="P34580"/>
<dbReference type="EnsemblMetazoa" id="T26G10.1.1">
    <property type="protein sequence ID" value="T26G10.1.1"/>
    <property type="gene ID" value="WBGene00012059"/>
</dbReference>
<dbReference type="GeneID" id="176321"/>
<dbReference type="KEGG" id="cel:CELE_T26G10.1"/>
<dbReference type="UCSC" id="T26G10.1">
    <property type="organism name" value="c. elegans"/>
</dbReference>
<dbReference type="AGR" id="WB:WBGene00012059"/>
<dbReference type="CTD" id="176321"/>
<dbReference type="WormBase" id="T26G10.1">
    <property type="protein sequence ID" value="CE00337"/>
    <property type="gene ID" value="WBGene00012059"/>
</dbReference>
<dbReference type="eggNOG" id="KOG0330">
    <property type="taxonomic scope" value="Eukaryota"/>
</dbReference>
<dbReference type="GeneTree" id="ENSGT00940000155774"/>
<dbReference type="HOGENOM" id="CLU_003041_1_1_1"/>
<dbReference type="InParanoid" id="P34580"/>
<dbReference type="OMA" id="GIGIKCC"/>
<dbReference type="OrthoDB" id="10261904at2759"/>
<dbReference type="PhylomeDB" id="P34580"/>
<dbReference type="Reactome" id="R-CEL-6791226">
    <property type="pathway name" value="Major pathway of rRNA processing in the nucleolus and cytosol"/>
</dbReference>
<dbReference type="PRO" id="PR:P34580"/>
<dbReference type="Proteomes" id="UP000001940">
    <property type="component" value="Chromosome III"/>
</dbReference>
<dbReference type="Bgee" id="WBGene00012059">
    <property type="expression patterns" value="Expressed in germ line (C elegans) and 4 other cell types or tissues"/>
</dbReference>
<dbReference type="GO" id="GO:0005634">
    <property type="term" value="C:nucleus"/>
    <property type="evidence" value="ECO:0000318"/>
    <property type="project" value="GO_Central"/>
</dbReference>
<dbReference type="GO" id="GO:0043186">
    <property type="term" value="C:P granule"/>
    <property type="evidence" value="ECO:0007669"/>
    <property type="project" value="UniProtKB-ARBA"/>
</dbReference>
<dbReference type="GO" id="GO:0005524">
    <property type="term" value="F:ATP binding"/>
    <property type="evidence" value="ECO:0007669"/>
    <property type="project" value="UniProtKB-KW"/>
</dbReference>
<dbReference type="GO" id="GO:0016887">
    <property type="term" value="F:ATP hydrolysis activity"/>
    <property type="evidence" value="ECO:0007669"/>
    <property type="project" value="RHEA"/>
</dbReference>
<dbReference type="GO" id="GO:0003723">
    <property type="term" value="F:RNA binding"/>
    <property type="evidence" value="ECO:0007669"/>
    <property type="project" value="UniProtKB-KW"/>
</dbReference>
<dbReference type="GO" id="GO:0003724">
    <property type="term" value="F:RNA helicase activity"/>
    <property type="evidence" value="ECO:0007669"/>
    <property type="project" value="UniProtKB-EC"/>
</dbReference>
<dbReference type="GO" id="GO:0006364">
    <property type="term" value="P:rRNA processing"/>
    <property type="evidence" value="ECO:0000318"/>
    <property type="project" value="GO_Central"/>
</dbReference>
<dbReference type="CDD" id="cd17954">
    <property type="entry name" value="DEADc_DDX47"/>
    <property type="match status" value="1"/>
</dbReference>
<dbReference type="CDD" id="cd18787">
    <property type="entry name" value="SF2_C_DEAD"/>
    <property type="match status" value="1"/>
</dbReference>
<dbReference type="Gene3D" id="3.40.50.300">
    <property type="entry name" value="P-loop containing nucleotide triphosphate hydrolases"/>
    <property type="match status" value="2"/>
</dbReference>
<dbReference type="InterPro" id="IPR044765">
    <property type="entry name" value="DDX47/Rrp3_DEADc"/>
</dbReference>
<dbReference type="InterPro" id="IPR011545">
    <property type="entry name" value="DEAD/DEAH_box_helicase_dom"/>
</dbReference>
<dbReference type="InterPro" id="IPR050079">
    <property type="entry name" value="DEAD_box_RNA_helicase"/>
</dbReference>
<dbReference type="InterPro" id="IPR014001">
    <property type="entry name" value="Helicase_ATP-bd"/>
</dbReference>
<dbReference type="InterPro" id="IPR001650">
    <property type="entry name" value="Helicase_C-like"/>
</dbReference>
<dbReference type="InterPro" id="IPR027417">
    <property type="entry name" value="P-loop_NTPase"/>
</dbReference>
<dbReference type="InterPro" id="IPR000629">
    <property type="entry name" value="RNA-helicase_DEAD-box_CS"/>
</dbReference>
<dbReference type="InterPro" id="IPR014014">
    <property type="entry name" value="RNA_helicase_DEAD_Q_motif"/>
</dbReference>
<dbReference type="PANTHER" id="PTHR47959">
    <property type="entry name" value="ATP-DEPENDENT RNA HELICASE RHLE-RELATED"/>
    <property type="match status" value="1"/>
</dbReference>
<dbReference type="PANTHER" id="PTHR47959:SF20">
    <property type="entry name" value="RNA HELICASE"/>
    <property type="match status" value="1"/>
</dbReference>
<dbReference type="Pfam" id="PF00270">
    <property type="entry name" value="DEAD"/>
    <property type="match status" value="1"/>
</dbReference>
<dbReference type="Pfam" id="PF00271">
    <property type="entry name" value="Helicase_C"/>
    <property type="match status" value="1"/>
</dbReference>
<dbReference type="SMART" id="SM00487">
    <property type="entry name" value="DEXDc"/>
    <property type="match status" value="1"/>
</dbReference>
<dbReference type="SMART" id="SM00490">
    <property type="entry name" value="HELICc"/>
    <property type="match status" value="1"/>
</dbReference>
<dbReference type="SUPFAM" id="SSF52540">
    <property type="entry name" value="P-loop containing nucleoside triphosphate hydrolases"/>
    <property type="match status" value="1"/>
</dbReference>
<dbReference type="PROSITE" id="PS00039">
    <property type="entry name" value="DEAD_ATP_HELICASE"/>
    <property type="match status" value="1"/>
</dbReference>
<dbReference type="PROSITE" id="PS51192">
    <property type="entry name" value="HELICASE_ATP_BIND_1"/>
    <property type="match status" value="1"/>
</dbReference>
<dbReference type="PROSITE" id="PS51194">
    <property type="entry name" value="HELICASE_CTER"/>
    <property type="match status" value="1"/>
</dbReference>
<dbReference type="PROSITE" id="PS51195">
    <property type="entry name" value="Q_MOTIF"/>
    <property type="match status" value="1"/>
</dbReference>
<evidence type="ECO:0000250" key="1"/>
<evidence type="ECO:0000255" key="2">
    <source>
        <dbReference type="PROSITE-ProRule" id="PRU00541"/>
    </source>
</evidence>
<evidence type="ECO:0000255" key="3">
    <source>
        <dbReference type="PROSITE-ProRule" id="PRU00542"/>
    </source>
</evidence>
<evidence type="ECO:0000256" key="4">
    <source>
        <dbReference type="SAM" id="MobiDB-lite"/>
    </source>
</evidence>
<evidence type="ECO:0000305" key="5"/>
<comment type="function">
    <text evidence="1">Probable ATP-dependent RNA helicase which may be involved in ribosome biogenesis.</text>
</comment>
<comment type="catalytic activity">
    <reaction>
        <text>ATP + H2O = ADP + phosphate + H(+)</text>
        <dbReference type="Rhea" id="RHEA:13065"/>
        <dbReference type="ChEBI" id="CHEBI:15377"/>
        <dbReference type="ChEBI" id="CHEBI:15378"/>
        <dbReference type="ChEBI" id="CHEBI:30616"/>
        <dbReference type="ChEBI" id="CHEBI:43474"/>
        <dbReference type="ChEBI" id="CHEBI:456216"/>
        <dbReference type="EC" id="3.6.4.13"/>
    </reaction>
</comment>
<comment type="subcellular location">
    <subcellularLocation>
        <location evidence="1">Nucleus</location>
    </subcellularLocation>
</comment>
<comment type="similarity">
    <text evidence="5">Belongs to the DEAD box helicase family. DDX47/RRP3 subfamily.</text>
</comment>
<accession>P34580</accession>
<reference key="1">
    <citation type="journal article" date="1994" name="Nature">
        <title>2.2 Mb of contiguous nucleotide sequence from chromosome III of C. elegans.</title>
        <authorList>
            <person name="Wilson R."/>
            <person name="Ainscough R."/>
            <person name="Anderson K."/>
            <person name="Baynes C."/>
            <person name="Berks M."/>
            <person name="Bonfield J."/>
            <person name="Burton J."/>
            <person name="Connell M."/>
            <person name="Copsey T."/>
            <person name="Cooper J."/>
            <person name="Coulson A."/>
            <person name="Craxton M."/>
            <person name="Dear S."/>
            <person name="Du Z."/>
            <person name="Durbin R."/>
            <person name="Favello A."/>
            <person name="Fraser A."/>
            <person name="Fulton L."/>
            <person name="Gardner A."/>
            <person name="Green P."/>
            <person name="Hawkins T."/>
            <person name="Hillier L."/>
            <person name="Jier M."/>
            <person name="Johnston L."/>
            <person name="Jones M."/>
            <person name="Kershaw J."/>
            <person name="Kirsten J."/>
            <person name="Laisster N."/>
            <person name="Latreille P."/>
            <person name="Lightning J."/>
            <person name="Lloyd C."/>
            <person name="Mortimore B."/>
            <person name="O'Callaghan M."/>
            <person name="Parsons J."/>
            <person name="Percy C."/>
            <person name="Rifken L."/>
            <person name="Roopra A."/>
            <person name="Saunders D."/>
            <person name="Shownkeen R."/>
            <person name="Sims M."/>
            <person name="Smaldon N."/>
            <person name="Smith A."/>
            <person name="Smith M."/>
            <person name="Sonnhammer E."/>
            <person name="Staden R."/>
            <person name="Sulston J."/>
            <person name="Thierry-Mieg J."/>
            <person name="Thomas K."/>
            <person name="Vaudin M."/>
            <person name="Vaughan K."/>
            <person name="Waterston R."/>
            <person name="Watson A."/>
            <person name="Weinstock L."/>
            <person name="Wilkinson-Sproat J."/>
            <person name="Wohldman P."/>
        </authorList>
    </citation>
    <scope>NUCLEOTIDE SEQUENCE [LARGE SCALE GENOMIC DNA]</scope>
    <source>
        <strain>Bristol N2</strain>
    </source>
</reference>
<reference key="2">
    <citation type="journal article" date="1998" name="Science">
        <title>Genome sequence of the nematode C. elegans: a platform for investigating biology.</title>
        <authorList>
            <consortium name="The C. elegans sequencing consortium"/>
        </authorList>
    </citation>
    <scope>NUCLEOTIDE SEQUENCE [LARGE SCALE GENOMIC DNA]</scope>
    <source>
        <strain>Bristol N2</strain>
    </source>
</reference>
<organism>
    <name type="scientific">Caenorhabditis elegans</name>
    <dbReference type="NCBI Taxonomy" id="6239"/>
    <lineage>
        <taxon>Eukaryota</taxon>
        <taxon>Metazoa</taxon>
        <taxon>Ecdysozoa</taxon>
        <taxon>Nematoda</taxon>
        <taxon>Chromadorea</taxon>
        <taxon>Rhabditida</taxon>
        <taxon>Rhabditina</taxon>
        <taxon>Rhabditomorpha</taxon>
        <taxon>Rhabditoidea</taxon>
        <taxon>Rhabditidae</taxon>
        <taxon>Peloderinae</taxon>
        <taxon>Caenorhabditis</taxon>
    </lineage>
</organism>
<sequence length="489" mass="54228">MSDSSSSDGEDNQKFLGNRKKNLTKKKVVTEEIEKDDEEDVKEKSFAELGVSQPLCDACQRLGWMKPSKIQQAALPHALQGKDVIGLAETGSGKTGAFAIPVLQSLLDHPQAFFCLVLTPTRELAFQIGQQFEALGSGIGLIAAVIVGGVDMAAQAMALARRPHIIVATPGRLVDHLENTKGFNLKALKFLIMDEADRILNMDFEVELDKILKVIPRERRTYLFSATMTKKVSKLERASLRDPARVSVSSRYKTVDNLKQHYIFVPNKYKETYLVYLLNEHAGNSAIVFCATCATTMQIAVMLRQLGMQAVPLHGQMSQEKRLGSLNKFKSKAREILVCTDVAARGLDIPHVDMVINYDMPSQSKDYVHRVGRTARAGRSGIAITVVTQYDVEAYQKIEANLGKKLDEYKCVENEVMVLVERTQEATENARIEMKEMDEKKKSGKKRRQNDDFGDTEESGGRFKMGIKSMGGRGGSGGGRGGKKKKMSK</sequence>
<gene>
    <name type="ORF">T26G10.1</name>
</gene>
<feature type="chain" id="PRO_0000055093" description="Putative ATP-dependent RNA helicase T26G10.1">
    <location>
        <begin position="1"/>
        <end position="489"/>
    </location>
</feature>
<feature type="domain" description="Helicase ATP-binding" evidence="2">
    <location>
        <begin position="75"/>
        <end position="246"/>
    </location>
</feature>
<feature type="domain" description="Helicase C-terminal" evidence="3">
    <location>
        <begin position="257"/>
        <end position="417"/>
    </location>
</feature>
<feature type="region of interest" description="Disordered" evidence="4">
    <location>
        <begin position="433"/>
        <end position="489"/>
    </location>
</feature>
<feature type="short sequence motif" description="Q motif">
    <location>
        <begin position="44"/>
        <end position="72"/>
    </location>
</feature>
<feature type="short sequence motif" description="DEAD box">
    <location>
        <begin position="194"/>
        <end position="197"/>
    </location>
</feature>
<feature type="compositionally biased region" description="Gly residues" evidence="4">
    <location>
        <begin position="469"/>
        <end position="480"/>
    </location>
</feature>
<feature type="binding site" evidence="2">
    <location>
        <begin position="88"/>
        <end position="95"/>
    </location>
    <ligand>
        <name>ATP</name>
        <dbReference type="ChEBI" id="CHEBI:30616"/>
    </ligand>
</feature>
<name>DDX47_CAEEL</name>